<keyword id="KW-0002">3D-structure</keyword>
<keyword id="KW-0106">Calcium</keyword>
<keyword id="KW-0119">Carbohydrate metabolism</keyword>
<keyword id="KW-1015">Disulfide bond</keyword>
<keyword id="KW-0325">Glycoprotein</keyword>
<keyword id="KW-0326">Glycosidase</keyword>
<keyword id="KW-0378">Hydrolase</keyword>
<keyword id="KW-0479">Metal-binding</keyword>
<keyword id="KW-0964">Secreted</keyword>
<protein>
    <recommendedName>
        <fullName>Acid alpha-amylase</fullName>
        <ecNumber evidence="3">3.2.1.1</ecNumber>
    </recommendedName>
    <alternativeName>
        <fullName>1,4-alpha-D-glucan glucanohydrolase</fullName>
    </alternativeName>
</protein>
<feature type="chain" id="PRO_0000054289" description="Acid alpha-amylase">
    <location>
        <begin position="1"/>
        <end position="484"/>
    </location>
</feature>
<feature type="active site" description="Nucleophile" evidence="3">
    <location>
        <position position="206"/>
    </location>
</feature>
<feature type="active site" description="Proton donor" evidence="3">
    <location>
        <position position="230"/>
    </location>
</feature>
<feature type="binding site" evidence="1">
    <location>
        <position position="83"/>
    </location>
    <ligand>
        <name>substrate</name>
    </ligand>
</feature>
<feature type="binding site" evidence="3 5">
    <location>
        <position position="121"/>
    </location>
    <ligand>
        <name>Ca(2+)</name>
        <dbReference type="ChEBI" id="CHEBI:29108"/>
        <label>1</label>
    </ligand>
</feature>
<feature type="binding site" evidence="1">
    <location>
        <position position="122"/>
    </location>
    <ligand>
        <name>substrate</name>
    </ligand>
</feature>
<feature type="binding site" evidence="3 5">
    <location>
        <position position="162"/>
    </location>
    <ligand>
        <name>Ca(2+)</name>
        <dbReference type="ChEBI" id="CHEBI:29108"/>
        <label>1</label>
    </ligand>
</feature>
<feature type="binding site" evidence="3 5">
    <location>
        <position position="175"/>
    </location>
    <ligand>
        <name>Ca(2+)</name>
        <dbReference type="ChEBI" id="CHEBI:29108"/>
        <label>1</label>
    </ligand>
</feature>
<feature type="binding site" evidence="1">
    <location>
        <position position="204"/>
    </location>
    <ligand>
        <name>substrate</name>
    </ligand>
</feature>
<feature type="binding site" evidence="3 5">
    <location>
        <position position="206"/>
    </location>
    <ligand>
        <name>Ca(2+)</name>
        <dbReference type="ChEBI" id="CHEBI:29108"/>
        <label>2</label>
    </ligand>
</feature>
<feature type="binding site" evidence="1">
    <location>
        <begin position="209"/>
        <end position="210"/>
    </location>
    <ligand>
        <name>substrate</name>
    </ligand>
</feature>
<feature type="binding site" evidence="3 5">
    <location>
        <position position="210"/>
    </location>
    <ligand>
        <name>Ca(2+)</name>
        <dbReference type="ChEBI" id="CHEBI:29108"/>
        <label>1</label>
    </ligand>
</feature>
<feature type="binding site" evidence="3 5">
    <location>
        <position position="230"/>
    </location>
    <ligand>
        <name>Ca(2+)</name>
        <dbReference type="ChEBI" id="CHEBI:29108"/>
        <label>2</label>
    </ligand>
</feature>
<feature type="binding site" evidence="1">
    <location>
        <position position="234"/>
    </location>
    <ligand>
        <name>substrate</name>
    </ligand>
</feature>
<feature type="binding site" evidence="1">
    <location>
        <position position="297"/>
    </location>
    <ligand>
        <name>substrate</name>
    </ligand>
</feature>
<feature type="binding site" evidence="1">
    <location>
        <position position="344"/>
    </location>
    <ligand>
        <name>substrate</name>
    </ligand>
</feature>
<feature type="site" description="Transition state stabilizer" evidence="1">
    <location>
        <position position="297"/>
    </location>
</feature>
<feature type="glycosylation site" description="N-linked (GlcNAc...) asparagine" evidence="2">
    <location>
        <position position="24"/>
    </location>
</feature>
<feature type="glycosylation site" description="N-linked (GlcNAc...) asparagine" evidence="2">
    <location>
        <position position="157"/>
    </location>
</feature>
<feature type="glycosylation site" description="N-linked (GlcNAc...) asparagine" evidence="2">
    <location>
        <position position="197"/>
    </location>
</feature>
<feature type="disulfide bond" evidence="3 5">
    <location>
        <begin position="30"/>
        <end position="38"/>
    </location>
</feature>
<feature type="disulfide bond" evidence="3 5">
    <location>
        <begin position="150"/>
        <end position="164"/>
    </location>
</feature>
<feature type="disulfide bond" evidence="3 5">
    <location>
        <begin position="240"/>
        <end position="283"/>
    </location>
</feature>
<feature type="disulfide bond" evidence="3 5">
    <location>
        <begin position="440"/>
        <end position="475"/>
    </location>
</feature>
<feature type="helix" evidence="6">
    <location>
        <begin position="3"/>
        <end position="6"/>
    </location>
</feature>
<feature type="strand" evidence="6">
    <location>
        <begin position="11"/>
        <end position="13"/>
    </location>
</feature>
<feature type="helix" evidence="6">
    <location>
        <begin position="16"/>
        <end position="19"/>
    </location>
</feature>
<feature type="helix" evidence="6">
    <location>
        <begin position="32"/>
        <end position="34"/>
    </location>
</feature>
<feature type="helix" evidence="6">
    <location>
        <begin position="42"/>
        <end position="47"/>
    </location>
</feature>
<feature type="helix" evidence="6">
    <location>
        <begin position="49"/>
        <end position="53"/>
    </location>
</feature>
<feature type="turn" evidence="6">
    <location>
        <begin position="54"/>
        <end position="56"/>
    </location>
</feature>
<feature type="strand" evidence="6">
    <location>
        <begin position="59"/>
        <end position="62"/>
    </location>
</feature>
<feature type="strand" evidence="6">
    <location>
        <begin position="66"/>
        <end position="68"/>
    </location>
</feature>
<feature type="strand" evidence="6">
    <location>
        <begin position="83"/>
        <end position="90"/>
    </location>
</feature>
<feature type="turn" evidence="6">
    <location>
        <begin position="92"/>
        <end position="94"/>
    </location>
</feature>
<feature type="helix" evidence="6">
    <location>
        <begin position="97"/>
        <end position="108"/>
    </location>
</feature>
<feature type="turn" evidence="6">
    <location>
        <begin position="109"/>
        <end position="111"/>
    </location>
</feature>
<feature type="strand" evidence="6">
    <location>
        <begin position="113"/>
        <end position="118"/>
    </location>
</feature>
<feature type="strand" evidence="6">
    <location>
        <begin position="125"/>
        <end position="127"/>
    </location>
</feature>
<feature type="helix" evidence="6">
    <location>
        <begin position="129"/>
        <end position="131"/>
    </location>
</feature>
<feature type="helix" evidence="6">
    <location>
        <begin position="134"/>
        <end position="136"/>
    </location>
</feature>
<feature type="strand" evidence="6">
    <location>
        <begin position="137"/>
        <end position="139"/>
    </location>
</feature>
<feature type="helix" evidence="6">
    <location>
        <begin position="143"/>
        <end position="145"/>
    </location>
</feature>
<feature type="helix" evidence="6">
    <location>
        <begin position="158"/>
        <end position="163"/>
    </location>
</feature>
<feature type="strand" evidence="6">
    <location>
        <begin position="164"/>
        <end position="167"/>
    </location>
</feature>
<feature type="strand" evidence="6">
    <location>
        <begin position="169"/>
        <end position="173"/>
    </location>
</feature>
<feature type="helix" evidence="6">
    <location>
        <begin position="181"/>
        <end position="198"/>
    </location>
</feature>
<feature type="strand" evidence="6">
    <location>
        <begin position="202"/>
        <end position="206"/>
    </location>
</feature>
<feature type="helix" evidence="6">
    <location>
        <begin position="213"/>
        <end position="215"/>
    </location>
</feature>
<feature type="helix" evidence="6">
    <location>
        <begin position="216"/>
        <end position="223"/>
    </location>
</feature>
<feature type="strand" evidence="6">
    <location>
        <begin position="225"/>
        <end position="229"/>
    </location>
</feature>
<feature type="helix" evidence="6">
    <location>
        <begin position="236"/>
        <end position="239"/>
    </location>
</feature>
<feature type="helix" evidence="6">
    <location>
        <begin position="240"/>
        <end position="244"/>
    </location>
</feature>
<feature type="strand" evidence="6">
    <location>
        <begin position="246"/>
        <end position="250"/>
    </location>
</feature>
<feature type="helix" evidence="6">
    <location>
        <begin position="252"/>
        <end position="262"/>
    </location>
</feature>
<feature type="helix" evidence="6">
    <location>
        <begin position="269"/>
        <end position="282"/>
    </location>
</feature>
<feature type="helix" evidence="6">
    <location>
        <begin position="286"/>
        <end position="288"/>
    </location>
</feature>
<feature type="strand" evidence="6">
    <location>
        <begin position="289"/>
        <end position="291"/>
    </location>
</feature>
<feature type="helix" evidence="6">
    <location>
        <begin position="301"/>
        <end position="303"/>
    </location>
</feature>
<feature type="helix" evidence="6">
    <location>
        <begin position="308"/>
        <end position="320"/>
    </location>
</feature>
<feature type="strand" evidence="6">
    <location>
        <begin position="321"/>
        <end position="328"/>
    </location>
</feature>
<feature type="turn" evidence="6">
    <location>
        <begin position="329"/>
        <end position="334"/>
    </location>
</feature>
<feature type="turn" evidence="6">
    <location>
        <begin position="339"/>
        <end position="343"/>
    </location>
</feature>
<feature type="helix" evidence="6">
    <location>
        <begin position="347"/>
        <end position="350"/>
    </location>
</feature>
<feature type="helix" evidence="6">
    <location>
        <begin position="357"/>
        <end position="375"/>
    </location>
</feature>
<feature type="turn" evidence="6">
    <location>
        <begin position="377"/>
        <end position="381"/>
    </location>
</feature>
<feature type="strand" evidence="6">
    <location>
        <begin position="385"/>
        <end position="390"/>
    </location>
</feature>
<feature type="strand" evidence="6">
    <location>
        <begin position="393"/>
        <end position="400"/>
    </location>
</feature>
<feature type="turn" evidence="6">
    <location>
        <begin position="401"/>
        <end position="403"/>
    </location>
</feature>
<feature type="strand" evidence="6">
    <location>
        <begin position="405"/>
        <end position="410"/>
    </location>
</feature>
<feature type="strand" evidence="6">
    <location>
        <begin position="419"/>
        <end position="423"/>
    </location>
</feature>
<feature type="strand" evidence="6">
    <location>
        <begin position="433"/>
        <end position="436"/>
    </location>
</feature>
<feature type="turn" evidence="6">
    <location>
        <begin position="437"/>
        <end position="440"/>
    </location>
</feature>
<feature type="strand" evidence="6">
    <location>
        <begin position="441"/>
        <end position="444"/>
    </location>
</feature>
<feature type="strand" evidence="6">
    <location>
        <begin position="451"/>
        <end position="455"/>
    </location>
</feature>
<feature type="strand" evidence="6">
    <location>
        <begin position="461"/>
        <end position="465"/>
    </location>
</feature>
<feature type="helix" evidence="6">
    <location>
        <begin position="466"/>
        <end position="469"/>
    </location>
</feature>
<comment type="catalytic activity">
    <reaction evidence="3">
        <text>Endohydrolysis of (1-&gt;4)-alpha-D-glucosidic linkages in polysaccharides containing three or more (1-&gt;4)-alpha-linked D-glucose units.</text>
        <dbReference type="EC" id="3.2.1.1"/>
    </reaction>
</comment>
<comment type="cofactor">
    <cofactor evidence="3">
        <name>Ca(2+)</name>
        <dbReference type="ChEBI" id="CHEBI:29108"/>
    </cofactor>
    <text evidence="3">Binds 2 calcium ions per subunit. Calcium is inhibitory at high concentrations.</text>
</comment>
<comment type="subunit">
    <text evidence="3">Monomer.</text>
</comment>
<comment type="subcellular location">
    <subcellularLocation>
        <location evidence="3">Secreted</location>
    </subcellularLocation>
</comment>
<comment type="similarity">
    <text evidence="4">Belongs to the glycosyl hydrolase 13 family.</text>
</comment>
<evidence type="ECO:0000250" key="1">
    <source>
        <dbReference type="UniProtKB" id="P0C1B3"/>
    </source>
</evidence>
<evidence type="ECO:0000255" key="2"/>
<evidence type="ECO:0000269" key="3">
    <source>
    </source>
</evidence>
<evidence type="ECO:0000305" key="4"/>
<evidence type="ECO:0007744" key="5">
    <source>
        <dbReference type="PDB" id="2AAA"/>
    </source>
</evidence>
<evidence type="ECO:0007829" key="6">
    <source>
        <dbReference type="PDB" id="2AAA"/>
    </source>
</evidence>
<accession>P56271</accession>
<proteinExistence type="evidence at protein level"/>
<name>AMYA_ASPNG</name>
<reference key="1">
    <citation type="journal article" date="1990" name="Biochemistry">
        <title>Calcium binding in alpha-amylases: an X-ray diffraction study at 2.1-A resolution of two enzymes from Aspergillus.</title>
        <authorList>
            <person name="Boel E."/>
            <person name="Brady L."/>
            <person name="Brzozowski A.M."/>
            <person name="Derewenda Z."/>
            <person name="Dodson G.G."/>
            <person name="Jensen V.J."/>
            <person name="Petersen S.B."/>
            <person name="Swift H."/>
            <person name="Thim L."/>
            <person name="Woldike H.F."/>
        </authorList>
    </citation>
    <scope>X-RAY CRYSTALLOGRAPHY (2.1 ANGSTROMS) IN COMPLEX WITH CALCIUM IONS</scope>
    <scope>CATALYTIC ACTIVITY</scope>
    <scope>ACTIVE SITE</scope>
    <scope>SUBCELLULAR LOCATION</scope>
    <scope>DISULFIDE BONDS</scope>
</reference>
<organism>
    <name type="scientific">Aspergillus niger</name>
    <dbReference type="NCBI Taxonomy" id="5061"/>
    <lineage>
        <taxon>Eukaryota</taxon>
        <taxon>Fungi</taxon>
        <taxon>Dikarya</taxon>
        <taxon>Ascomycota</taxon>
        <taxon>Pezizomycotina</taxon>
        <taxon>Eurotiomycetes</taxon>
        <taxon>Eurotiomycetidae</taxon>
        <taxon>Eurotiales</taxon>
        <taxon>Aspergillaceae</taxon>
        <taxon>Aspergillus</taxon>
        <taxon>Aspergillus subgen. Circumdati</taxon>
    </lineage>
</organism>
<sequence>LSAASWRTQSIYFLLTDRFGRTDNSTTATCNTGNEIYCGGSWQGIIDHLDYIEGMGFTAIWISPITEQLPQDTADGEAYHGYWQQKIYDVNSNFGTADNLKSLSDALHARGMYLMVDVVPDHMGYAGNGNDVDYSVFDPFDSSSYFHPYCLITDWDNLTMVEDCWEGDTIVSLPDLDTTETAVRTIWYDWVADLVSNYSVDGLRIDSVLEVQPDFFPGYNKASGVYCVGEIDNGNPASDCPYQKVLDGVLNYPIYWQLLYAFESSSGSISNLYNMIKSVASDCSDPTLLGNFIENHDNPRFAKYTSDYSQAKNVLSYIFLSDGIPIVYAGEEQHYAGGKVPYNREATWLSGYDTSAELYTWIATTNAIRKLAIAADSAYITYANDAFYTDSNTIAMAKGTSGSQVITVLSNKGSSGSSYTLTLSGSGYTSGTKLIEAYTCTSVTVDSSGDIPVPMASGLPRVLLPASVVDSSSLCGGSGRLYVE</sequence>
<dbReference type="EC" id="3.2.1.1" evidence="3"/>
<dbReference type="PIR" id="A35282">
    <property type="entry name" value="A35282"/>
</dbReference>
<dbReference type="PDB" id="2AAA">
    <property type="method" value="X-ray"/>
    <property type="resolution" value="2.10 A"/>
    <property type="chains" value="A=1-484"/>
</dbReference>
<dbReference type="PDBsum" id="2AAA"/>
<dbReference type="SMR" id="P56271"/>
<dbReference type="CAZy" id="GH13">
    <property type="family name" value="Glycoside Hydrolase Family 13"/>
</dbReference>
<dbReference type="PaxDb" id="5061-CADANGAP00008517"/>
<dbReference type="VEuPathDB" id="FungiDB:An11g03340"/>
<dbReference type="VEuPathDB" id="FungiDB:ASPNIDRAFT2_1147022"/>
<dbReference type="VEuPathDB" id="FungiDB:ATCC64974_89550"/>
<dbReference type="VEuPathDB" id="FungiDB:M747DRAFT_340768"/>
<dbReference type="eggNOG" id="KOG0471">
    <property type="taxonomic scope" value="Eukaryota"/>
</dbReference>
<dbReference type="EvolutionaryTrace" id="P56271"/>
<dbReference type="GO" id="GO:0005576">
    <property type="term" value="C:extracellular region"/>
    <property type="evidence" value="ECO:0007669"/>
    <property type="project" value="UniProtKB-SubCell"/>
</dbReference>
<dbReference type="GO" id="GO:0004556">
    <property type="term" value="F:alpha-amylase activity"/>
    <property type="evidence" value="ECO:0007669"/>
    <property type="project" value="UniProtKB-EC"/>
</dbReference>
<dbReference type="GO" id="GO:0005509">
    <property type="term" value="F:calcium ion binding"/>
    <property type="evidence" value="ECO:0007669"/>
    <property type="project" value="InterPro"/>
</dbReference>
<dbReference type="GO" id="GO:0016052">
    <property type="term" value="P:carbohydrate catabolic process"/>
    <property type="evidence" value="ECO:0007669"/>
    <property type="project" value="InterPro"/>
</dbReference>
<dbReference type="CDD" id="cd11319">
    <property type="entry name" value="AmyAc_euk_AmyA"/>
    <property type="match status" value="1"/>
</dbReference>
<dbReference type="FunFam" id="2.60.40.1180:FF:000037">
    <property type="entry name" value="Alpha-amylase A"/>
    <property type="match status" value="1"/>
</dbReference>
<dbReference type="FunFam" id="3.20.20.80:FF:000120">
    <property type="entry name" value="Alpha-amylase A"/>
    <property type="match status" value="1"/>
</dbReference>
<dbReference type="Gene3D" id="3.20.20.80">
    <property type="entry name" value="Glycosidases"/>
    <property type="match status" value="1"/>
</dbReference>
<dbReference type="Gene3D" id="2.60.40.1180">
    <property type="entry name" value="Golgi alpha-mannosidase II"/>
    <property type="match status" value="1"/>
</dbReference>
<dbReference type="InterPro" id="IPR013777">
    <property type="entry name" value="A-amylase-like"/>
</dbReference>
<dbReference type="InterPro" id="IPR015340">
    <property type="entry name" value="A_amylase_C_dom"/>
</dbReference>
<dbReference type="InterPro" id="IPR006047">
    <property type="entry name" value="Glyco_hydro_13_cat_dom"/>
</dbReference>
<dbReference type="InterPro" id="IPR013780">
    <property type="entry name" value="Glyco_hydro_b"/>
</dbReference>
<dbReference type="InterPro" id="IPR017853">
    <property type="entry name" value="Glycoside_hydrolase_SF"/>
</dbReference>
<dbReference type="PANTHER" id="PTHR10357:SF231">
    <property type="entry name" value="ALPHA-AMYLASE"/>
    <property type="match status" value="1"/>
</dbReference>
<dbReference type="PANTHER" id="PTHR10357">
    <property type="entry name" value="ALPHA-AMYLASE FAMILY MEMBER"/>
    <property type="match status" value="1"/>
</dbReference>
<dbReference type="Pfam" id="PF09260">
    <property type="entry name" value="A_amylase_dom_C"/>
    <property type="match status" value="1"/>
</dbReference>
<dbReference type="Pfam" id="PF00128">
    <property type="entry name" value="Alpha-amylase"/>
    <property type="match status" value="1"/>
</dbReference>
<dbReference type="PIRSF" id="PIRSF001024">
    <property type="entry name" value="Alph-amyl_fung"/>
    <property type="match status" value="1"/>
</dbReference>
<dbReference type="SMART" id="SM00642">
    <property type="entry name" value="Aamy"/>
    <property type="match status" value="1"/>
</dbReference>
<dbReference type="SUPFAM" id="SSF51445">
    <property type="entry name" value="(Trans)glycosidases"/>
    <property type="match status" value="1"/>
</dbReference>
<dbReference type="SUPFAM" id="SSF51011">
    <property type="entry name" value="Glycosyl hydrolase domain"/>
    <property type="match status" value="1"/>
</dbReference>